<proteinExistence type="inferred from homology"/>
<comment type="function">
    <text evidence="1">One of the proteins required for the normal export of preproteins out of the cell cytoplasm. It is a molecular chaperone that binds to a subset of precursor proteins, maintaining them in a translocation-competent state. It also specifically binds to its receptor SecA.</text>
</comment>
<comment type="subunit">
    <text evidence="1">Homotetramer, a dimer of dimers. One homotetramer interacts with 1 SecA dimer.</text>
</comment>
<comment type="subcellular location">
    <subcellularLocation>
        <location evidence="1">Cytoplasm</location>
    </subcellularLocation>
</comment>
<comment type="similarity">
    <text evidence="1">Belongs to the SecB family.</text>
</comment>
<feature type="chain" id="PRO_0000055430" description="Protein-export protein SecB">
    <location>
        <begin position="1"/>
        <end position="171"/>
    </location>
</feature>
<accession>Q5GV22</accession>
<organism>
    <name type="scientific">Xanthomonas oryzae pv. oryzae (strain KACC10331 / KXO85)</name>
    <dbReference type="NCBI Taxonomy" id="291331"/>
    <lineage>
        <taxon>Bacteria</taxon>
        <taxon>Pseudomonadati</taxon>
        <taxon>Pseudomonadota</taxon>
        <taxon>Gammaproteobacteria</taxon>
        <taxon>Lysobacterales</taxon>
        <taxon>Lysobacteraceae</taxon>
        <taxon>Xanthomonas</taxon>
    </lineage>
</organism>
<evidence type="ECO:0000255" key="1">
    <source>
        <dbReference type="HAMAP-Rule" id="MF_00821"/>
    </source>
</evidence>
<dbReference type="EMBL" id="AE013598">
    <property type="protein sequence ID" value="AAW77451.1"/>
    <property type="molecule type" value="Genomic_DNA"/>
</dbReference>
<dbReference type="SMR" id="Q5GV22"/>
<dbReference type="STRING" id="291331.XOO4197"/>
<dbReference type="KEGG" id="xoo:XOO4197"/>
<dbReference type="PATRIC" id="fig|291331.8.peg.4659"/>
<dbReference type="HOGENOM" id="CLU_111574_1_0_6"/>
<dbReference type="Proteomes" id="UP000006735">
    <property type="component" value="Chromosome"/>
</dbReference>
<dbReference type="GO" id="GO:0005737">
    <property type="term" value="C:cytoplasm"/>
    <property type="evidence" value="ECO:0007669"/>
    <property type="project" value="UniProtKB-SubCell"/>
</dbReference>
<dbReference type="GO" id="GO:0051082">
    <property type="term" value="F:unfolded protein binding"/>
    <property type="evidence" value="ECO:0007669"/>
    <property type="project" value="InterPro"/>
</dbReference>
<dbReference type="GO" id="GO:0006457">
    <property type="term" value="P:protein folding"/>
    <property type="evidence" value="ECO:0007669"/>
    <property type="project" value="UniProtKB-UniRule"/>
</dbReference>
<dbReference type="GO" id="GO:0051262">
    <property type="term" value="P:protein tetramerization"/>
    <property type="evidence" value="ECO:0007669"/>
    <property type="project" value="InterPro"/>
</dbReference>
<dbReference type="GO" id="GO:0015031">
    <property type="term" value="P:protein transport"/>
    <property type="evidence" value="ECO:0007669"/>
    <property type="project" value="UniProtKB-UniRule"/>
</dbReference>
<dbReference type="Gene3D" id="3.10.420.10">
    <property type="entry name" value="SecB-like"/>
    <property type="match status" value="1"/>
</dbReference>
<dbReference type="HAMAP" id="MF_00821">
    <property type="entry name" value="SecB"/>
    <property type="match status" value="1"/>
</dbReference>
<dbReference type="InterPro" id="IPR003708">
    <property type="entry name" value="SecB"/>
</dbReference>
<dbReference type="InterPro" id="IPR035958">
    <property type="entry name" value="SecB-like_sf"/>
</dbReference>
<dbReference type="NCBIfam" id="NF004391">
    <property type="entry name" value="PRK05751.1-2"/>
    <property type="match status" value="1"/>
</dbReference>
<dbReference type="NCBIfam" id="NF004393">
    <property type="entry name" value="PRK05751.1-4"/>
    <property type="match status" value="1"/>
</dbReference>
<dbReference type="NCBIfam" id="TIGR00809">
    <property type="entry name" value="secB"/>
    <property type="match status" value="1"/>
</dbReference>
<dbReference type="PANTHER" id="PTHR36918">
    <property type="match status" value="1"/>
</dbReference>
<dbReference type="PANTHER" id="PTHR36918:SF1">
    <property type="entry name" value="PROTEIN-EXPORT PROTEIN SECB"/>
    <property type="match status" value="1"/>
</dbReference>
<dbReference type="Pfam" id="PF02556">
    <property type="entry name" value="SecB"/>
    <property type="match status" value="1"/>
</dbReference>
<dbReference type="PRINTS" id="PR01594">
    <property type="entry name" value="SECBCHAPRONE"/>
</dbReference>
<dbReference type="SUPFAM" id="SSF54611">
    <property type="entry name" value="SecB-like"/>
    <property type="match status" value="1"/>
</dbReference>
<gene>
    <name evidence="1" type="primary">secB</name>
    <name type="ordered locus">XOO4197</name>
</gene>
<protein>
    <recommendedName>
        <fullName evidence="1">Protein-export protein SecB</fullName>
    </recommendedName>
</protein>
<keyword id="KW-0143">Chaperone</keyword>
<keyword id="KW-0963">Cytoplasm</keyword>
<keyword id="KW-0653">Protein transport</keyword>
<keyword id="KW-1185">Reference proteome</keyword>
<keyword id="KW-0811">Translocation</keyword>
<keyword id="KW-0813">Transport</keyword>
<sequence>MSDEILNGAAAPADAAAAGPAFTIEKIYVKDVSFESPNAPAVFNDANQPELQLNLNQKVQRLNDNAFEVVLAVTLTCTAGGKTAYVAEVQQAGVFGLVGLDPQAIDVLLGTQCPNILFPYVRTLVSDLIQAGGFPPFYLQPINFEALYAESVRQRHNESASLADSEPAGNA</sequence>
<name>SECB_XANOR</name>
<reference key="1">
    <citation type="journal article" date="2005" name="Nucleic Acids Res.">
        <title>The genome sequence of Xanthomonas oryzae pathovar oryzae KACC10331, the bacterial blight pathogen of rice.</title>
        <authorList>
            <person name="Lee B.-M."/>
            <person name="Park Y.-J."/>
            <person name="Park D.-S."/>
            <person name="Kang H.-W."/>
            <person name="Kim J.-G."/>
            <person name="Song E.-S."/>
            <person name="Park I.-C."/>
            <person name="Yoon U.-H."/>
            <person name="Hahn J.-H."/>
            <person name="Koo B.-S."/>
            <person name="Lee G.-B."/>
            <person name="Kim H."/>
            <person name="Park H.-S."/>
            <person name="Yoon K.-O."/>
            <person name="Kim J.-H."/>
            <person name="Jung C.-H."/>
            <person name="Koh N.-H."/>
            <person name="Seo J.-S."/>
            <person name="Go S.-J."/>
        </authorList>
    </citation>
    <scope>NUCLEOTIDE SEQUENCE [LARGE SCALE GENOMIC DNA]</scope>
    <source>
        <strain>KACC10331 / KXO85</strain>
    </source>
</reference>